<accession>Q09866</accession>
<accession>Q9UUH9</accession>
<protein>
    <recommendedName>
        <fullName>Uncharacterized WD repeat-containing protein C12G12.01c</fullName>
    </recommendedName>
</protein>
<sequence>MLNRSKKRNGCYFWVNGSSDEIRYVAVKASPKVNWKTHIIWRSLKNVKCIDSFHGNNEILGAGSSTGNISLLSVKHPEFQAVVTPGYARPCNSLAFSETEHLVAGFAKSRNESSLKLWDLNSLLSDPKSSPLMQSSTLDGVSSVCYKKDTPLLLTGSTSRSVHIIDTRQQLDSVSSVNTQYYSNIVVDPFSPNYFAANSYDGDIAIFDTRYFKSDNYLQIILRNENKKPKNPQLFALKYSEWKPGQLAVLSNNSITLRQLLPCVNGNEGSANNSVFVNYEKKYPVKPNSQCSGIDFFTPSTAFPTHVQILGVINEQPKLFSVHDEVIPFSFNPYNDLIFSFKEKLYPLNSSPFNTLSDVPQFDVSEFVDENSFDSSSSCSSKVFLTTRNNSINSEDSAHEVLLSYNRVLGSDIQGTILDRVKKGYQFDSQKNSELVSDLYLKDLWSWIHLSHRQSEESLFGDTGDTDFSYQGALGIWFMDTELTSMSDVFEAKESKFLEKKILRLARDVIERLDLDIFTSIQTKRPLRQLALLACGLGMSNDDLLLEIRRLIRKNEHVKAAGLALFHGKIENVVRILSSGNELEKTISTAVAGYITSQGLSNFGSDSLWKEMSRNLSTELEDPYLRAIFAYVSNSDWRDVLDEVSLSLKDRLGIALRFLPDDDLSNYLCDLCHTTVQSGDPEGLLLTGLTPLGMELLQNYIDHTSDVQTAALIAAFVVPKKFLDKRAEDWTESYRELLNRWKLYRERAKFDIFRTELSKNHTGEITRKATEPSIRIICNFCRKPIFPFSNRNECNNLPTPIQRGVSKAGPAKHLGKSCPHCGQPLPKCSVCGFSLGDEDVPQKDDFSQKPQNYVKEVNLQKSRFGLWFSFCLNCGHGAHASHASEWFSTHTICPVPNCDCECKLK</sequence>
<reference key="1">
    <citation type="journal article" date="2002" name="Nature">
        <title>The genome sequence of Schizosaccharomyces pombe.</title>
        <authorList>
            <person name="Wood V."/>
            <person name="Gwilliam R."/>
            <person name="Rajandream M.A."/>
            <person name="Lyne M.H."/>
            <person name="Lyne R."/>
            <person name="Stewart A."/>
            <person name="Sgouros J.G."/>
            <person name="Peat N."/>
            <person name="Hayles J."/>
            <person name="Baker S.G."/>
            <person name="Basham D."/>
            <person name="Bowman S."/>
            <person name="Brooks K."/>
            <person name="Brown D."/>
            <person name="Brown S."/>
            <person name="Chillingworth T."/>
            <person name="Churcher C.M."/>
            <person name="Collins M."/>
            <person name="Connor R."/>
            <person name="Cronin A."/>
            <person name="Davis P."/>
            <person name="Feltwell T."/>
            <person name="Fraser A."/>
            <person name="Gentles S."/>
            <person name="Goble A."/>
            <person name="Hamlin N."/>
            <person name="Harris D.E."/>
            <person name="Hidalgo J."/>
            <person name="Hodgson G."/>
            <person name="Holroyd S."/>
            <person name="Hornsby T."/>
            <person name="Howarth S."/>
            <person name="Huckle E.J."/>
            <person name="Hunt S."/>
            <person name="Jagels K."/>
            <person name="James K.D."/>
            <person name="Jones L."/>
            <person name="Jones M."/>
            <person name="Leather S."/>
            <person name="McDonald S."/>
            <person name="McLean J."/>
            <person name="Mooney P."/>
            <person name="Moule S."/>
            <person name="Mungall K.L."/>
            <person name="Murphy L.D."/>
            <person name="Niblett D."/>
            <person name="Odell C."/>
            <person name="Oliver K."/>
            <person name="O'Neil S."/>
            <person name="Pearson D."/>
            <person name="Quail M.A."/>
            <person name="Rabbinowitsch E."/>
            <person name="Rutherford K.M."/>
            <person name="Rutter S."/>
            <person name="Saunders D."/>
            <person name="Seeger K."/>
            <person name="Sharp S."/>
            <person name="Skelton J."/>
            <person name="Simmonds M.N."/>
            <person name="Squares R."/>
            <person name="Squares S."/>
            <person name="Stevens K."/>
            <person name="Taylor K."/>
            <person name="Taylor R.G."/>
            <person name="Tivey A."/>
            <person name="Walsh S.V."/>
            <person name="Warren T."/>
            <person name="Whitehead S."/>
            <person name="Woodward J.R."/>
            <person name="Volckaert G."/>
            <person name="Aert R."/>
            <person name="Robben J."/>
            <person name="Grymonprez B."/>
            <person name="Weltjens I."/>
            <person name="Vanstreels E."/>
            <person name="Rieger M."/>
            <person name="Schaefer M."/>
            <person name="Mueller-Auer S."/>
            <person name="Gabel C."/>
            <person name="Fuchs M."/>
            <person name="Duesterhoeft A."/>
            <person name="Fritzc C."/>
            <person name="Holzer E."/>
            <person name="Moestl D."/>
            <person name="Hilbert H."/>
            <person name="Borzym K."/>
            <person name="Langer I."/>
            <person name="Beck A."/>
            <person name="Lehrach H."/>
            <person name="Reinhardt R."/>
            <person name="Pohl T.M."/>
            <person name="Eger P."/>
            <person name="Zimmermann W."/>
            <person name="Wedler H."/>
            <person name="Wambutt R."/>
            <person name="Purnelle B."/>
            <person name="Goffeau A."/>
            <person name="Cadieu E."/>
            <person name="Dreano S."/>
            <person name="Gloux S."/>
            <person name="Lelaure V."/>
            <person name="Mottier S."/>
            <person name="Galibert F."/>
            <person name="Aves S.J."/>
            <person name="Xiang Z."/>
            <person name="Hunt C."/>
            <person name="Moore K."/>
            <person name="Hurst S.M."/>
            <person name="Lucas M."/>
            <person name="Rochet M."/>
            <person name="Gaillardin C."/>
            <person name="Tallada V.A."/>
            <person name="Garzon A."/>
            <person name="Thode G."/>
            <person name="Daga R.R."/>
            <person name="Cruzado L."/>
            <person name="Jimenez J."/>
            <person name="Sanchez M."/>
            <person name="del Rey F."/>
            <person name="Benito J."/>
            <person name="Dominguez A."/>
            <person name="Revuelta J.L."/>
            <person name="Moreno S."/>
            <person name="Armstrong J."/>
            <person name="Forsburg S.L."/>
            <person name="Cerutti L."/>
            <person name="Lowe T."/>
            <person name="McCombie W.R."/>
            <person name="Paulsen I."/>
            <person name="Potashkin J."/>
            <person name="Shpakovski G.V."/>
            <person name="Ussery D."/>
            <person name="Barrell B.G."/>
            <person name="Nurse P."/>
        </authorList>
    </citation>
    <scope>NUCLEOTIDE SEQUENCE [LARGE SCALE GENOMIC DNA]</scope>
    <source>
        <strain>972 / ATCC 24843</strain>
    </source>
</reference>
<reference key="2">
    <citation type="journal article" date="2008" name="J. Proteome Res.">
        <title>Phosphoproteome analysis of fission yeast.</title>
        <authorList>
            <person name="Wilson-Grady J.T."/>
            <person name="Villen J."/>
            <person name="Gygi S.P."/>
        </authorList>
    </citation>
    <scope>PHOSPHORYLATION [LARGE SCALE ANALYSIS] AT SER-394 AND SER-397</scope>
    <scope>IDENTIFICATION BY MASS SPECTROMETRY</scope>
</reference>
<proteinExistence type="evidence at protein level"/>
<comment type="similarity">
    <text evidence="2">Belongs to the WD repeat mio family.</text>
</comment>
<gene>
    <name type="ORF">SPAC12G12.01c</name>
    <name type="ORF">SPAC630.02</name>
</gene>
<feature type="chain" id="PRO_0000051489" description="Uncharacterized WD repeat-containing protein C12G12.01c">
    <location>
        <begin position="1"/>
        <end position="905"/>
    </location>
</feature>
<feature type="repeat" description="WD 1">
    <location>
        <begin position="42"/>
        <end position="82"/>
    </location>
</feature>
<feature type="repeat" description="WD 2">
    <location>
        <begin position="86"/>
        <end position="128"/>
    </location>
</feature>
<feature type="repeat" description="WD 3">
    <location>
        <begin position="136"/>
        <end position="175"/>
    </location>
</feature>
<feature type="repeat" description="WD 4">
    <location>
        <begin position="177"/>
        <end position="217"/>
    </location>
</feature>
<feature type="modified residue" description="Phosphoserine" evidence="1">
    <location>
        <position position="394"/>
    </location>
</feature>
<feature type="modified residue" description="Phosphoserine" evidence="1">
    <location>
        <position position="397"/>
    </location>
</feature>
<organism>
    <name type="scientific">Schizosaccharomyces pombe (strain 972 / ATCC 24843)</name>
    <name type="common">Fission yeast</name>
    <dbReference type="NCBI Taxonomy" id="284812"/>
    <lineage>
        <taxon>Eukaryota</taxon>
        <taxon>Fungi</taxon>
        <taxon>Dikarya</taxon>
        <taxon>Ascomycota</taxon>
        <taxon>Taphrinomycotina</taxon>
        <taxon>Schizosaccharomycetes</taxon>
        <taxon>Schizosaccharomycetales</taxon>
        <taxon>Schizosaccharomycetaceae</taxon>
        <taxon>Schizosaccharomyces</taxon>
    </lineage>
</organism>
<evidence type="ECO:0000269" key="1">
    <source>
    </source>
</evidence>
<evidence type="ECO:0000305" key="2"/>
<dbReference type="EMBL" id="CU329670">
    <property type="protein sequence ID" value="CAA91496.2"/>
    <property type="molecule type" value="Genomic_DNA"/>
</dbReference>
<dbReference type="PIR" id="T38980">
    <property type="entry name" value="T38980"/>
</dbReference>
<dbReference type="RefSeq" id="XP_001713039.1">
    <property type="nucleotide sequence ID" value="XM_001712987.2"/>
</dbReference>
<dbReference type="SMR" id="Q09866"/>
<dbReference type="BioGRID" id="280457">
    <property type="interactions" value="33"/>
</dbReference>
<dbReference type="FunCoup" id="Q09866">
    <property type="interactions" value="721"/>
</dbReference>
<dbReference type="STRING" id="284812.Q09866"/>
<dbReference type="iPTMnet" id="Q09866"/>
<dbReference type="PaxDb" id="4896-SPAC12G12.01c.1"/>
<dbReference type="EnsemblFungi" id="SPAC12G12.01c.1">
    <property type="protein sequence ID" value="SPAC12G12.01c.1:pep"/>
    <property type="gene ID" value="SPAC12G12.01c"/>
</dbReference>
<dbReference type="PomBase" id="SPAC12G12.01c"/>
<dbReference type="VEuPathDB" id="FungiDB:SPAC12G12.01c"/>
<dbReference type="eggNOG" id="KOG1008">
    <property type="taxonomic scope" value="Eukaryota"/>
</dbReference>
<dbReference type="HOGENOM" id="CLU_005843_0_0_1"/>
<dbReference type="InParanoid" id="Q09866"/>
<dbReference type="OMA" id="GYMAYKD"/>
<dbReference type="PhylomeDB" id="Q09866"/>
<dbReference type="PRO" id="PR:Q09866"/>
<dbReference type="Proteomes" id="UP000002485">
    <property type="component" value="Chromosome I"/>
</dbReference>
<dbReference type="GO" id="GO:0005737">
    <property type="term" value="C:cytoplasm"/>
    <property type="evidence" value="ECO:0007005"/>
    <property type="project" value="PomBase"/>
</dbReference>
<dbReference type="GO" id="GO:0005829">
    <property type="term" value="C:cytosol"/>
    <property type="evidence" value="ECO:0007005"/>
    <property type="project" value="PomBase"/>
</dbReference>
<dbReference type="GO" id="GO:0061700">
    <property type="term" value="C:GATOR2 complex"/>
    <property type="evidence" value="ECO:0000353"/>
    <property type="project" value="PomBase"/>
</dbReference>
<dbReference type="GO" id="GO:0005774">
    <property type="term" value="C:vacuolar membrane"/>
    <property type="evidence" value="ECO:0000269"/>
    <property type="project" value="PomBase"/>
</dbReference>
<dbReference type="GO" id="GO:0061630">
    <property type="term" value="F:ubiquitin protein ligase activity"/>
    <property type="evidence" value="ECO:0000255"/>
    <property type="project" value="PomBase"/>
</dbReference>
<dbReference type="GO" id="GO:0008270">
    <property type="term" value="F:zinc ion binding"/>
    <property type="evidence" value="ECO:0000255"/>
    <property type="project" value="PomBase"/>
</dbReference>
<dbReference type="GO" id="GO:1904263">
    <property type="term" value="P:positive regulation of TORC1 signaling"/>
    <property type="evidence" value="ECO:0000318"/>
    <property type="project" value="GO_Central"/>
</dbReference>
<dbReference type="CDD" id="cd16691">
    <property type="entry name" value="mRING-H2-C3H3C2_Mio"/>
    <property type="match status" value="1"/>
</dbReference>
<dbReference type="Gene3D" id="2.130.10.10">
    <property type="entry name" value="YVTN repeat-like/Quinoprotein amine dehydrogenase"/>
    <property type="match status" value="1"/>
</dbReference>
<dbReference type="InterPro" id="IPR037593">
    <property type="entry name" value="MIOS/Sea4"/>
</dbReference>
<dbReference type="InterPro" id="IPR049092">
    <property type="entry name" value="MIOS_a-sol"/>
</dbReference>
<dbReference type="InterPro" id="IPR015943">
    <property type="entry name" value="WD40/YVTN_repeat-like_dom_sf"/>
</dbReference>
<dbReference type="InterPro" id="IPR036322">
    <property type="entry name" value="WD40_repeat_dom_sf"/>
</dbReference>
<dbReference type="InterPro" id="IPR001680">
    <property type="entry name" value="WD40_rpt"/>
</dbReference>
<dbReference type="InterPro" id="IPR031488">
    <property type="entry name" value="Zn_ribbon_mio"/>
</dbReference>
<dbReference type="PANTHER" id="PTHR16453:SF9">
    <property type="entry name" value="GATOR COMPLEX PROTEIN MIOS"/>
    <property type="match status" value="1"/>
</dbReference>
<dbReference type="PANTHER" id="PTHR16453">
    <property type="entry name" value="WD40 DOMAIN-CONTAINING PROTEIN MIO FAMILY MEMBER"/>
    <property type="match status" value="1"/>
</dbReference>
<dbReference type="Pfam" id="PF21719">
    <property type="entry name" value="MIOS_a-sol"/>
    <property type="match status" value="1"/>
</dbReference>
<dbReference type="Pfam" id="PF17034">
    <property type="entry name" value="zinc_ribbon_16"/>
    <property type="match status" value="1"/>
</dbReference>
<dbReference type="SMART" id="SM00320">
    <property type="entry name" value="WD40"/>
    <property type="match status" value="3"/>
</dbReference>
<dbReference type="SUPFAM" id="SSF50978">
    <property type="entry name" value="WD40 repeat-like"/>
    <property type="match status" value="1"/>
</dbReference>
<name>YAG1_SCHPO</name>
<keyword id="KW-0597">Phosphoprotein</keyword>
<keyword id="KW-1185">Reference proteome</keyword>
<keyword id="KW-0677">Repeat</keyword>
<keyword id="KW-0853">WD repeat</keyword>